<dbReference type="EMBL" id="CU329670">
    <property type="protein sequence ID" value="CAA22446.1"/>
    <property type="molecule type" value="Genomic_DNA"/>
</dbReference>
<dbReference type="PIR" id="T38583">
    <property type="entry name" value="T38583"/>
</dbReference>
<dbReference type="RefSeq" id="NP_594924.1">
    <property type="nucleotide sequence ID" value="NM_001020356.2"/>
</dbReference>
<dbReference type="SMR" id="O94393"/>
<dbReference type="BioGRID" id="279503">
    <property type="interactions" value="19"/>
</dbReference>
<dbReference type="FunCoup" id="O94393">
    <property type="interactions" value="787"/>
</dbReference>
<dbReference type="STRING" id="284812.O94393"/>
<dbReference type="iPTMnet" id="O94393"/>
<dbReference type="PaxDb" id="4896-SPAC2H10.02c.1"/>
<dbReference type="EnsemblFungi" id="SPAC2H10.02c.1">
    <property type="protein sequence ID" value="SPAC2H10.02c.1:pep"/>
    <property type="gene ID" value="SPAC2H10.02c"/>
</dbReference>
<dbReference type="GeneID" id="2543070"/>
<dbReference type="KEGG" id="spo:2543070"/>
<dbReference type="PomBase" id="SPAC2H10.02c">
    <property type="gene designation" value="nas2"/>
</dbReference>
<dbReference type="VEuPathDB" id="FungiDB:SPAC2H10.02c"/>
<dbReference type="eggNOG" id="KOG3129">
    <property type="taxonomic scope" value="Eukaryota"/>
</dbReference>
<dbReference type="HOGENOM" id="CLU_073146_2_1_1"/>
<dbReference type="InParanoid" id="O94393"/>
<dbReference type="OMA" id="ARHTIIC"/>
<dbReference type="PhylomeDB" id="O94393"/>
<dbReference type="Reactome" id="R-SPO-9907900">
    <property type="pathway name" value="Proteasome assembly"/>
</dbReference>
<dbReference type="PRO" id="PR:O94393"/>
<dbReference type="Proteomes" id="UP000002485">
    <property type="component" value="Chromosome I"/>
</dbReference>
<dbReference type="GO" id="GO:0005737">
    <property type="term" value="C:cytoplasm"/>
    <property type="evidence" value="ECO:0000318"/>
    <property type="project" value="GO_Central"/>
</dbReference>
<dbReference type="GO" id="GO:0005829">
    <property type="term" value="C:cytosol"/>
    <property type="evidence" value="ECO:0007005"/>
    <property type="project" value="PomBase"/>
</dbReference>
<dbReference type="GO" id="GO:0005634">
    <property type="term" value="C:nucleus"/>
    <property type="evidence" value="ECO:0007005"/>
    <property type="project" value="PomBase"/>
</dbReference>
<dbReference type="GO" id="GO:0070682">
    <property type="term" value="P:proteasome regulatory particle assembly"/>
    <property type="evidence" value="ECO:0000318"/>
    <property type="project" value="GO_Central"/>
</dbReference>
<dbReference type="FunFam" id="2.30.42.10:FF:000107">
    <property type="entry name" value="26S proteasome non-ATPase regulatory subunit 9"/>
    <property type="match status" value="1"/>
</dbReference>
<dbReference type="Gene3D" id="2.30.42.10">
    <property type="match status" value="1"/>
</dbReference>
<dbReference type="Gene3D" id="6.10.140.1710">
    <property type="match status" value="1"/>
</dbReference>
<dbReference type="InterPro" id="IPR040815">
    <property type="entry name" value="Nas2_N"/>
</dbReference>
<dbReference type="InterPro" id="IPR036034">
    <property type="entry name" value="PDZ_sf"/>
</dbReference>
<dbReference type="InterPro" id="IPR035269">
    <property type="entry name" value="PSMD9"/>
</dbReference>
<dbReference type="PANTHER" id="PTHR12651">
    <property type="entry name" value="26S PROTEASOME NON-ATPASE REGULATORY SUBUNIT 9"/>
    <property type="match status" value="1"/>
</dbReference>
<dbReference type="PANTHER" id="PTHR12651:SF1">
    <property type="entry name" value="26S PROTEASOME NON-ATPASE REGULATORY SUBUNIT 9"/>
    <property type="match status" value="1"/>
</dbReference>
<dbReference type="Pfam" id="PF18265">
    <property type="entry name" value="Nas2_N"/>
    <property type="match status" value="1"/>
</dbReference>
<dbReference type="SUPFAM" id="SSF50156">
    <property type="entry name" value="PDZ domain-like"/>
    <property type="match status" value="1"/>
</dbReference>
<gene>
    <name type="primary">nas2</name>
    <name type="ORF">SPAC2H10.02c</name>
</gene>
<sequence>MDEFKQLDLKKREIENRLNELEGVLLKERVTMDTPLLTEDGFPRSDIDVPSIRTARHEIITLRNDHRELEDQIKKVLEKVFSGFSKESLAANDETKLAQEADPLNFNAANYNMNDIISRSKILGRVKPFCVVDSVAVESPAQEAGLCIGDELVHVQNVTSLSELPTFISNNVNKTLDVLLIRGYSADGSTNLVELKLTPHKWQGPGLLGCHLR</sequence>
<comment type="function">
    <text evidence="1">Acts as a chaperone during the assembly of the 26S proteasome, specifically of the base subcomplex of the 19S regulatory complex (RC).</text>
</comment>
<comment type="subcellular location">
    <subcellularLocation>
        <location evidence="3">Cytoplasm</location>
    </subcellularLocation>
    <subcellularLocation>
        <location evidence="3">Nucleus</location>
    </subcellularLocation>
</comment>
<keyword id="KW-0143">Chaperone</keyword>
<keyword id="KW-0175">Coiled coil</keyword>
<keyword id="KW-0963">Cytoplasm</keyword>
<keyword id="KW-0539">Nucleus</keyword>
<keyword id="KW-1185">Reference proteome</keyword>
<protein>
    <recommendedName>
        <fullName>Probable 26S proteasome regulatory subunit p27</fullName>
    </recommendedName>
</protein>
<accession>O94393</accession>
<proteinExistence type="inferred from homology"/>
<organism>
    <name type="scientific">Schizosaccharomyces pombe (strain 972 / ATCC 24843)</name>
    <name type="common">Fission yeast</name>
    <dbReference type="NCBI Taxonomy" id="284812"/>
    <lineage>
        <taxon>Eukaryota</taxon>
        <taxon>Fungi</taxon>
        <taxon>Dikarya</taxon>
        <taxon>Ascomycota</taxon>
        <taxon>Taphrinomycotina</taxon>
        <taxon>Schizosaccharomycetes</taxon>
        <taxon>Schizosaccharomycetales</taxon>
        <taxon>Schizosaccharomycetaceae</taxon>
        <taxon>Schizosaccharomyces</taxon>
    </lineage>
</organism>
<reference key="1">
    <citation type="journal article" date="2002" name="Nature">
        <title>The genome sequence of Schizosaccharomyces pombe.</title>
        <authorList>
            <person name="Wood V."/>
            <person name="Gwilliam R."/>
            <person name="Rajandream M.A."/>
            <person name="Lyne M.H."/>
            <person name="Lyne R."/>
            <person name="Stewart A."/>
            <person name="Sgouros J.G."/>
            <person name="Peat N."/>
            <person name="Hayles J."/>
            <person name="Baker S.G."/>
            <person name="Basham D."/>
            <person name="Bowman S."/>
            <person name="Brooks K."/>
            <person name="Brown D."/>
            <person name="Brown S."/>
            <person name="Chillingworth T."/>
            <person name="Churcher C.M."/>
            <person name="Collins M."/>
            <person name="Connor R."/>
            <person name="Cronin A."/>
            <person name="Davis P."/>
            <person name="Feltwell T."/>
            <person name="Fraser A."/>
            <person name="Gentles S."/>
            <person name="Goble A."/>
            <person name="Hamlin N."/>
            <person name="Harris D.E."/>
            <person name="Hidalgo J."/>
            <person name="Hodgson G."/>
            <person name="Holroyd S."/>
            <person name="Hornsby T."/>
            <person name="Howarth S."/>
            <person name="Huckle E.J."/>
            <person name="Hunt S."/>
            <person name="Jagels K."/>
            <person name="James K.D."/>
            <person name="Jones L."/>
            <person name="Jones M."/>
            <person name="Leather S."/>
            <person name="McDonald S."/>
            <person name="McLean J."/>
            <person name="Mooney P."/>
            <person name="Moule S."/>
            <person name="Mungall K.L."/>
            <person name="Murphy L.D."/>
            <person name="Niblett D."/>
            <person name="Odell C."/>
            <person name="Oliver K."/>
            <person name="O'Neil S."/>
            <person name="Pearson D."/>
            <person name="Quail M.A."/>
            <person name="Rabbinowitsch E."/>
            <person name="Rutherford K.M."/>
            <person name="Rutter S."/>
            <person name="Saunders D."/>
            <person name="Seeger K."/>
            <person name="Sharp S."/>
            <person name="Skelton J."/>
            <person name="Simmonds M.N."/>
            <person name="Squares R."/>
            <person name="Squares S."/>
            <person name="Stevens K."/>
            <person name="Taylor K."/>
            <person name="Taylor R.G."/>
            <person name="Tivey A."/>
            <person name="Walsh S.V."/>
            <person name="Warren T."/>
            <person name="Whitehead S."/>
            <person name="Woodward J.R."/>
            <person name="Volckaert G."/>
            <person name="Aert R."/>
            <person name="Robben J."/>
            <person name="Grymonprez B."/>
            <person name="Weltjens I."/>
            <person name="Vanstreels E."/>
            <person name="Rieger M."/>
            <person name="Schaefer M."/>
            <person name="Mueller-Auer S."/>
            <person name="Gabel C."/>
            <person name="Fuchs M."/>
            <person name="Duesterhoeft A."/>
            <person name="Fritzc C."/>
            <person name="Holzer E."/>
            <person name="Moestl D."/>
            <person name="Hilbert H."/>
            <person name="Borzym K."/>
            <person name="Langer I."/>
            <person name="Beck A."/>
            <person name="Lehrach H."/>
            <person name="Reinhardt R."/>
            <person name="Pohl T.M."/>
            <person name="Eger P."/>
            <person name="Zimmermann W."/>
            <person name="Wedler H."/>
            <person name="Wambutt R."/>
            <person name="Purnelle B."/>
            <person name="Goffeau A."/>
            <person name="Cadieu E."/>
            <person name="Dreano S."/>
            <person name="Gloux S."/>
            <person name="Lelaure V."/>
            <person name="Mottier S."/>
            <person name="Galibert F."/>
            <person name="Aves S.J."/>
            <person name="Xiang Z."/>
            <person name="Hunt C."/>
            <person name="Moore K."/>
            <person name="Hurst S.M."/>
            <person name="Lucas M."/>
            <person name="Rochet M."/>
            <person name="Gaillardin C."/>
            <person name="Tallada V.A."/>
            <person name="Garzon A."/>
            <person name="Thode G."/>
            <person name="Daga R.R."/>
            <person name="Cruzado L."/>
            <person name="Jimenez J."/>
            <person name="Sanchez M."/>
            <person name="del Rey F."/>
            <person name="Benito J."/>
            <person name="Dominguez A."/>
            <person name="Revuelta J.L."/>
            <person name="Moreno S."/>
            <person name="Armstrong J."/>
            <person name="Forsburg S.L."/>
            <person name="Cerutti L."/>
            <person name="Lowe T."/>
            <person name="McCombie W.R."/>
            <person name="Paulsen I."/>
            <person name="Potashkin J."/>
            <person name="Shpakovski G.V."/>
            <person name="Ussery D."/>
            <person name="Barrell B.G."/>
            <person name="Nurse P."/>
        </authorList>
    </citation>
    <scope>NUCLEOTIDE SEQUENCE [LARGE SCALE GENOMIC DNA]</scope>
    <source>
        <strain>972 / ATCC 24843</strain>
    </source>
</reference>
<reference key="2">
    <citation type="journal article" date="2006" name="Nat. Biotechnol.">
        <title>ORFeome cloning and global analysis of protein localization in the fission yeast Schizosaccharomyces pombe.</title>
        <authorList>
            <person name="Matsuyama A."/>
            <person name="Arai R."/>
            <person name="Yashiroda Y."/>
            <person name="Shirai A."/>
            <person name="Kamata A."/>
            <person name="Sekido S."/>
            <person name="Kobayashi Y."/>
            <person name="Hashimoto A."/>
            <person name="Hamamoto M."/>
            <person name="Hiraoka Y."/>
            <person name="Horinouchi S."/>
            <person name="Yoshida M."/>
        </authorList>
    </citation>
    <scope>SUBCELLULAR LOCATION [LARGE SCALE ANALYSIS]</scope>
</reference>
<name>PSMD9_SCHPO</name>
<feature type="chain" id="PRO_0000343145" description="Probable 26S proteasome regulatory subunit p27">
    <location>
        <begin position="1"/>
        <end position="213"/>
    </location>
</feature>
<feature type="domain" description="PDZ">
    <location>
        <begin position="120"/>
        <end position="184"/>
    </location>
</feature>
<feature type="coiled-coil region" evidence="2">
    <location>
        <begin position="1"/>
        <end position="82"/>
    </location>
</feature>
<evidence type="ECO:0000250" key="1"/>
<evidence type="ECO:0000255" key="2"/>
<evidence type="ECO:0000269" key="3">
    <source>
    </source>
</evidence>